<keyword id="KW-0028">Amino-acid biosynthesis</keyword>
<keyword id="KW-0057">Aromatic amino acid biosynthesis</keyword>
<keyword id="KW-0456">Lyase</keyword>
<organism>
    <name type="scientific">Vibrio vulnificus (strain YJ016)</name>
    <dbReference type="NCBI Taxonomy" id="196600"/>
    <lineage>
        <taxon>Bacteria</taxon>
        <taxon>Pseudomonadati</taxon>
        <taxon>Pseudomonadota</taxon>
        <taxon>Gammaproteobacteria</taxon>
        <taxon>Vibrionales</taxon>
        <taxon>Vibrionaceae</taxon>
        <taxon>Vibrio</taxon>
    </lineage>
</organism>
<comment type="function">
    <text evidence="1">Catalyzes a trans-dehydration via an enolate intermediate.</text>
</comment>
<comment type="catalytic activity">
    <reaction evidence="1">
        <text>3-dehydroquinate = 3-dehydroshikimate + H2O</text>
        <dbReference type="Rhea" id="RHEA:21096"/>
        <dbReference type="ChEBI" id="CHEBI:15377"/>
        <dbReference type="ChEBI" id="CHEBI:16630"/>
        <dbReference type="ChEBI" id="CHEBI:32364"/>
        <dbReference type="EC" id="4.2.1.10"/>
    </reaction>
</comment>
<comment type="pathway">
    <text evidence="1">Metabolic intermediate biosynthesis; chorismate biosynthesis; chorismate from D-erythrose 4-phosphate and phosphoenolpyruvate: step 3/7.</text>
</comment>
<comment type="subunit">
    <text evidence="1">Homododecamer.</text>
</comment>
<comment type="similarity">
    <text evidence="1">Belongs to the type-II 3-dehydroquinase family.</text>
</comment>
<comment type="sequence caution" evidence="2">
    <conflict type="erroneous initiation">
        <sequence resource="EMBL-CDS" id="BAC95898"/>
    </conflict>
</comment>
<evidence type="ECO:0000255" key="1">
    <source>
        <dbReference type="HAMAP-Rule" id="MF_00169"/>
    </source>
</evidence>
<evidence type="ECO:0000305" key="2"/>
<sequence>MSAKSRILVLNGPNINLLGLREPGHYGHQTLPQIVDTLTQQAQTAGIELEHLQSNREYELIEAIHAAHGNVDFIIINPAAFTHTSVALRDALLGVAIPFIEVHLSNVHAREPFRHHSYLSDKALGVICGLGAQGYEFALSAAIARLQAK</sequence>
<proteinExistence type="inferred from homology"/>
<name>AROQ_VIBVY</name>
<dbReference type="EC" id="4.2.1.10" evidence="1"/>
<dbReference type="EMBL" id="BA000037">
    <property type="protein sequence ID" value="BAC95898.1"/>
    <property type="status" value="ALT_INIT"/>
    <property type="molecule type" value="Genomic_DNA"/>
</dbReference>
<dbReference type="RefSeq" id="WP_011079222.1">
    <property type="nucleotide sequence ID" value="NC_005139.1"/>
</dbReference>
<dbReference type="SMR" id="Q7MGU2"/>
<dbReference type="STRING" id="672.VV93_v1c28520"/>
<dbReference type="KEGG" id="vvy:VV3134"/>
<dbReference type="eggNOG" id="COG0757">
    <property type="taxonomic scope" value="Bacteria"/>
</dbReference>
<dbReference type="HOGENOM" id="CLU_090968_1_0_6"/>
<dbReference type="UniPathway" id="UPA00053">
    <property type="reaction ID" value="UER00086"/>
</dbReference>
<dbReference type="Proteomes" id="UP000002675">
    <property type="component" value="Chromosome I"/>
</dbReference>
<dbReference type="GO" id="GO:0003855">
    <property type="term" value="F:3-dehydroquinate dehydratase activity"/>
    <property type="evidence" value="ECO:0007669"/>
    <property type="project" value="UniProtKB-UniRule"/>
</dbReference>
<dbReference type="GO" id="GO:0008652">
    <property type="term" value="P:amino acid biosynthetic process"/>
    <property type="evidence" value="ECO:0007669"/>
    <property type="project" value="UniProtKB-KW"/>
</dbReference>
<dbReference type="GO" id="GO:0009073">
    <property type="term" value="P:aromatic amino acid family biosynthetic process"/>
    <property type="evidence" value="ECO:0007669"/>
    <property type="project" value="UniProtKB-KW"/>
</dbReference>
<dbReference type="GO" id="GO:0009423">
    <property type="term" value="P:chorismate biosynthetic process"/>
    <property type="evidence" value="ECO:0007669"/>
    <property type="project" value="UniProtKB-UniRule"/>
</dbReference>
<dbReference type="GO" id="GO:0019631">
    <property type="term" value="P:quinate catabolic process"/>
    <property type="evidence" value="ECO:0007669"/>
    <property type="project" value="TreeGrafter"/>
</dbReference>
<dbReference type="CDD" id="cd00466">
    <property type="entry name" value="DHQase_II"/>
    <property type="match status" value="1"/>
</dbReference>
<dbReference type="Gene3D" id="3.40.50.9100">
    <property type="entry name" value="Dehydroquinase, class II"/>
    <property type="match status" value="1"/>
</dbReference>
<dbReference type="HAMAP" id="MF_00169">
    <property type="entry name" value="AroQ"/>
    <property type="match status" value="1"/>
</dbReference>
<dbReference type="InterPro" id="IPR001874">
    <property type="entry name" value="DHquinase_II"/>
</dbReference>
<dbReference type="InterPro" id="IPR018509">
    <property type="entry name" value="DHquinase_II_CS"/>
</dbReference>
<dbReference type="InterPro" id="IPR036441">
    <property type="entry name" value="DHquinase_II_sf"/>
</dbReference>
<dbReference type="NCBIfam" id="TIGR01088">
    <property type="entry name" value="aroQ"/>
    <property type="match status" value="1"/>
</dbReference>
<dbReference type="NCBIfam" id="NF003804">
    <property type="entry name" value="PRK05395.1-1"/>
    <property type="match status" value="1"/>
</dbReference>
<dbReference type="NCBIfam" id="NF003805">
    <property type="entry name" value="PRK05395.1-2"/>
    <property type="match status" value="1"/>
</dbReference>
<dbReference type="NCBIfam" id="NF003806">
    <property type="entry name" value="PRK05395.1-3"/>
    <property type="match status" value="1"/>
</dbReference>
<dbReference type="NCBIfam" id="NF003807">
    <property type="entry name" value="PRK05395.1-4"/>
    <property type="match status" value="1"/>
</dbReference>
<dbReference type="PANTHER" id="PTHR21272">
    <property type="entry name" value="CATABOLIC 3-DEHYDROQUINASE"/>
    <property type="match status" value="1"/>
</dbReference>
<dbReference type="PANTHER" id="PTHR21272:SF3">
    <property type="entry name" value="CATABOLIC 3-DEHYDROQUINASE"/>
    <property type="match status" value="1"/>
</dbReference>
<dbReference type="Pfam" id="PF01220">
    <property type="entry name" value="DHquinase_II"/>
    <property type="match status" value="1"/>
</dbReference>
<dbReference type="PIRSF" id="PIRSF001399">
    <property type="entry name" value="DHquinase_II"/>
    <property type="match status" value="1"/>
</dbReference>
<dbReference type="SUPFAM" id="SSF52304">
    <property type="entry name" value="Type II 3-dehydroquinate dehydratase"/>
    <property type="match status" value="1"/>
</dbReference>
<dbReference type="PROSITE" id="PS01029">
    <property type="entry name" value="DEHYDROQUINASE_II"/>
    <property type="match status" value="1"/>
</dbReference>
<feature type="chain" id="PRO_0000159940" description="3-dehydroquinate dehydratase">
    <location>
        <begin position="1"/>
        <end position="149"/>
    </location>
</feature>
<feature type="active site" description="Proton acceptor" evidence="1">
    <location>
        <position position="26"/>
    </location>
</feature>
<feature type="active site" description="Proton donor" evidence="1">
    <location>
        <position position="103"/>
    </location>
</feature>
<feature type="binding site" evidence="1">
    <location>
        <position position="77"/>
    </location>
    <ligand>
        <name>substrate</name>
    </ligand>
</feature>
<feature type="binding site" evidence="1">
    <location>
        <position position="83"/>
    </location>
    <ligand>
        <name>substrate</name>
    </ligand>
</feature>
<feature type="binding site" evidence="1">
    <location>
        <position position="90"/>
    </location>
    <ligand>
        <name>substrate</name>
    </ligand>
</feature>
<feature type="binding site" evidence="1">
    <location>
        <begin position="104"/>
        <end position="105"/>
    </location>
    <ligand>
        <name>substrate</name>
    </ligand>
</feature>
<feature type="binding site" evidence="1">
    <location>
        <position position="114"/>
    </location>
    <ligand>
        <name>substrate</name>
    </ligand>
</feature>
<feature type="site" description="Transition state stabilizer" evidence="1">
    <location>
        <position position="21"/>
    </location>
</feature>
<protein>
    <recommendedName>
        <fullName evidence="1">3-dehydroquinate dehydratase</fullName>
        <shortName evidence="1">3-dehydroquinase</shortName>
        <ecNumber evidence="1">4.2.1.10</ecNumber>
    </recommendedName>
    <alternativeName>
        <fullName evidence="1">Type II DHQase</fullName>
    </alternativeName>
</protein>
<accession>Q7MGU2</accession>
<gene>
    <name evidence="1" type="primary">aroQ</name>
    <name type="ordered locus">VV3134</name>
</gene>
<reference key="1">
    <citation type="journal article" date="2003" name="Genome Res.">
        <title>Comparative genome analysis of Vibrio vulnificus, a marine pathogen.</title>
        <authorList>
            <person name="Chen C.-Y."/>
            <person name="Wu K.-M."/>
            <person name="Chang Y.-C."/>
            <person name="Chang C.-H."/>
            <person name="Tsai H.-C."/>
            <person name="Liao T.-L."/>
            <person name="Liu Y.-M."/>
            <person name="Chen H.-J."/>
            <person name="Shen A.B.-T."/>
            <person name="Li J.-C."/>
            <person name="Su T.-L."/>
            <person name="Shao C.-P."/>
            <person name="Lee C.-T."/>
            <person name="Hor L.-I."/>
            <person name="Tsai S.-F."/>
        </authorList>
    </citation>
    <scope>NUCLEOTIDE SEQUENCE [LARGE SCALE GENOMIC DNA]</scope>
    <source>
        <strain>YJ016</strain>
    </source>
</reference>